<reference key="1">
    <citation type="journal article" date="2009" name="PLoS Genet.">
        <title>Organised genome dynamics in the Escherichia coli species results in highly diverse adaptive paths.</title>
        <authorList>
            <person name="Touchon M."/>
            <person name="Hoede C."/>
            <person name="Tenaillon O."/>
            <person name="Barbe V."/>
            <person name="Baeriswyl S."/>
            <person name="Bidet P."/>
            <person name="Bingen E."/>
            <person name="Bonacorsi S."/>
            <person name="Bouchier C."/>
            <person name="Bouvet O."/>
            <person name="Calteau A."/>
            <person name="Chiapello H."/>
            <person name="Clermont O."/>
            <person name="Cruveiller S."/>
            <person name="Danchin A."/>
            <person name="Diard M."/>
            <person name="Dossat C."/>
            <person name="Karoui M.E."/>
            <person name="Frapy E."/>
            <person name="Garry L."/>
            <person name="Ghigo J.M."/>
            <person name="Gilles A.M."/>
            <person name="Johnson J."/>
            <person name="Le Bouguenec C."/>
            <person name="Lescat M."/>
            <person name="Mangenot S."/>
            <person name="Martinez-Jehanne V."/>
            <person name="Matic I."/>
            <person name="Nassif X."/>
            <person name="Oztas S."/>
            <person name="Petit M.A."/>
            <person name="Pichon C."/>
            <person name="Rouy Z."/>
            <person name="Ruf C.S."/>
            <person name="Schneider D."/>
            <person name="Tourret J."/>
            <person name="Vacherie B."/>
            <person name="Vallenet D."/>
            <person name="Medigue C."/>
            <person name="Rocha E.P.C."/>
            <person name="Denamur E."/>
        </authorList>
    </citation>
    <scope>NUCLEOTIDE SEQUENCE [LARGE SCALE GENOMIC DNA]</scope>
    <source>
        <strain>IAI1</strain>
    </source>
</reference>
<evidence type="ECO:0000255" key="1">
    <source>
        <dbReference type="HAMAP-Rule" id="MF_01013"/>
    </source>
</evidence>
<sequence length="258" mass="28426">MLAKRIIPCLDVRDGQVVKGVQFRNHEIIGDIVPLAKRYAEEGADELVFYDITASSDGRVVDKSWVSRVAEVIDIPFCVAGGIKSLDDAAKILSFGADKISINSPALADPTLITRLADRFGVQCIVVGIDTWYDGETGKYHVNQYTGDESRTRVTQWETLDWVQEVQKRGAGEIVLNMMNQDGVRNGYDLEQLKKVREVCHVPLIASGGAGTMEHFLEAFRDADVDGALAASVFHKQIINIGELKAYLATQGVEIRIC</sequence>
<protein>
    <recommendedName>
        <fullName evidence="1">Imidazole glycerol phosphate synthase subunit HisF</fullName>
        <ecNumber evidence="1">4.3.2.10</ecNumber>
    </recommendedName>
    <alternativeName>
        <fullName evidence="1">IGP synthase cyclase subunit</fullName>
    </alternativeName>
    <alternativeName>
        <fullName evidence="1">IGP synthase subunit HisF</fullName>
    </alternativeName>
    <alternativeName>
        <fullName evidence="1">ImGP synthase subunit HisF</fullName>
        <shortName evidence="1">IGPS subunit HisF</shortName>
    </alternativeName>
</protein>
<keyword id="KW-0028">Amino-acid biosynthesis</keyword>
<keyword id="KW-0963">Cytoplasm</keyword>
<keyword id="KW-0368">Histidine biosynthesis</keyword>
<keyword id="KW-0456">Lyase</keyword>
<dbReference type="EC" id="4.3.2.10" evidence="1"/>
<dbReference type="EMBL" id="CU928160">
    <property type="protein sequence ID" value="CAQ98943.1"/>
    <property type="molecule type" value="Genomic_DNA"/>
</dbReference>
<dbReference type="RefSeq" id="WP_000880161.1">
    <property type="nucleotide sequence ID" value="NC_011741.1"/>
</dbReference>
<dbReference type="SMR" id="B7M404"/>
<dbReference type="KEGG" id="ecr:ECIAI1_2095"/>
<dbReference type="HOGENOM" id="CLU_048577_4_0_6"/>
<dbReference type="UniPathway" id="UPA00031">
    <property type="reaction ID" value="UER00010"/>
</dbReference>
<dbReference type="GO" id="GO:0005737">
    <property type="term" value="C:cytoplasm"/>
    <property type="evidence" value="ECO:0007669"/>
    <property type="project" value="UniProtKB-SubCell"/>
</dbReference>
<dbReference type="GO" id="GO:0000107">
    <property type="term" value="F:imidazoleglycerol-phosphate synthase activity"/>
    <property type="evidence" value="ECO:0007669"/>
    <property type="project" value="UniProtKB-UniRule"/>
</dbReference>
<dbReference type="GO" id="GO:0016829">
    <property type="term" value="F:lyase activity"/>
    <property type="evidence" value="ECO:0007669"/>
    <property type="project" value="UniProtKB-KW"/>
</dbReference>
<dbReference type="GO" id="GO:0000105">
    <property type="term" value="P:L-histidine biosynthetic process"/>
    <property type="evidence" value="ECO:0007669"/>
    <property type="project" value="UniProtKB-UniRule"/>
</dbReference>
<dbReference type="CDD" id="cd04731">
    <property type="entry name" value="HisF"/>
    <property type="match status" value="1"/>
</dbReference>
<dbReference type="FunFam" id="3.20.20.70:FF:000006">
    <property type="entry name" value="Imidazole glycerol phosphate synthase subunit HisF"/>
    <property type="match status" value="1"/>
</dbReference>
<dbReference type="Gene3D" id="3.20.20.70">
    <property type="entry name" value="Aldolase class I"/>
    <property type="match status" value="1"/>
</dbReference>
<dbReference type="HAMAP" id="MF_01013">
    <property type="entry name" value="HisF"/>
    <property type="match status" value="1"/>
</dbReference>
<dbReference type="InterPro" id="IPR013785">
    <property type="entry name" value="Aldolase_TIM"/>
</dbReference>
<dbReference type="InterPro" id="IPR006062">
    <property type="entry name" value="His_biosynth"/>
</dbReference>
<dbReference type="InterPro" id="IPR004651">
    <property type="entry name" value="HisF"/>
</dbReference>
<dbReference type="InterPro" id="IPR050064">
    <property type="entry name" value="IGPS_HisA/HisF"/>
</dbReference>
<dbReference type="InterPro" id="IPR011060">
    <property type="entry name" value="RibuloseP-bd_barrel"/>
</dbReference>
<dbReference type="NCBIfam" id="TIGR00735">
    <property type="entry name" value="hisF"/>
    <property type="match status" value="1"/>
</dbReference>
<dbReference type="PANTHER" id="PTHR21235:SF2">
    <property type="entry name" value="IMIDAZOLE GLYCEROL PHOSPHATE SYNTHASE HISHF"/>
    <property type="match status" value="1"/>
</dbReference>
<dbReference type="PANTHER" id="PTHR21235">
    <property type="entry name" value="IMIDAZOLE GLYCEROL PHOSPHATE SYNTHASE SUBUNIT HISF/H IGP SYNTHASE SUBUNIT HISF/H"/>
    <property type="match status" value="1"/>
</dbReference>
<dbReference type="Pfam" id="PF00977">
    <property type="entry name" value="His_biosynth"/>
    <property type="match status" value="1"/>
</dbReference>
<dbReference type="SUPFAM" id="SSF51366">
    <property type="entry name" value="Ribulose-phoshate binding barrel"/>
    <property type="match status" value="1"/>
</dbReference>
<organism>
    <name type="scientific">Escherichia coli O8 (strain IAI1)</name>
    <dbReference type="NCBI Taxonomy" id="585034"/>
    <lineage>
        <taxon>Bacteria</taxon>
        <taxon>Pseudomonadati</taxon>
        <taxon>Pseudomonadota</taxon>
        <taxon>Gammaproteobacteria</taxon>
        <taxon>Enterobacterales</taxon>
        <taxon>Enterobacteriaceae</taxon>
        <taxon>Escherichia</taxon>
    </lineage>
</organism>
<accession>B7M404</accession>
<feature type="chain" id="PRO_1000134996" description="Imidazole glycerol phosphate synthase subunit HisF">
    <location>
        <begin position="1"/>
        <end position="258"/>
    </location>
</feature>
<feature type="active site" evidence="1">
    <location>
        <position position="11"/>
    </location>
</feature>
<feature type="active site" evidence="1">
    <location>
        <position position="130"/>
    </location>
</feature>
<comment type="function">
    <text evidence="1">IGPS catalyzes the conversion of PRFAR and glutamine to IGP, AICAR and glutamate. The HisF subunit catalyzes the cyclization activity that produces IGP and AICAR from PRFAR using the ammonia provided by the HisH subunit.</text>
</comment>
<comment type="catalytic activity">
    <reaction evidence="1">
        <text>5-[(5-phospho-1-deoxy-D-ribulos-1-ylimino)methylamino]-1-(5-phospho-beta-D-ribosyl)imidazole-4-carboxamide + L-glutamine = D-erythro-1-(imidazol-4-yl)glycerol 3-phosphate + 5-amino-1-(5-phospho-beta-D-ribosyl)imidazole-4-carboxamide + L-glutamate + H(+)</text>
        <dbReference type="Rhea" id="RHEA:24793"/>
        <dbReference type="ChEBI" id="CHEBI:15378"/>
        <dbReference type="ChEBI" id="CHEBI:29985"/>
        <dbReference type="ChEBI" id="CHEBI:58278"/>
        <dbReference type="ChEBI" id="CHEBI:58359"/>
        <dbReference type="ChEBI" id="CHEBI:58475"/>
        <dbReference type="ChEBI" id="CHEBI:58525"/>
        <dbReference type="EC" id="4.3.2.10"/>
    </reaction>
</comment>
<comment type="pathway">
    <text evidence="1">Amino-acid biosynthesis; L-histidine biosynthesis; L-histidine from 5-phospho-alpha-D-ribose 1-diphosphate: step 5/9.</text>
</comment>
<comment type="subunit">
    <text evidence="1">Heterodimer of HisH and HisF.</text>
</comment>
<comment type="subcellular location">
    <subcellularLocation>
        <location evidence="1">Cytoplasm</location>
    </subcellularLocation>
</comment>
<comment type="similarity">
    <text evidence="1">Belongs to the HisA/HisF family.</text>
</comment>
<gene>
    <name evidence="1" type="primary">hisF</name>
    <name type="ordered locus">ECIAI1_2095</name>
</gene>
<proteinExistence type="inferred from homology"/>
<name>HIS6_ECO8A</name>